<gene>
    <name evidence="1" type="primary">argS</name>
    <name type="ordered locus">BRADO4052</name>
</gene>
<name>SYR_BRASO</name>
<proteinExistence type="inferred from homology"/>
<dbReference type="EC" id="6.1.1.19" evidence="1"/>
<dbReference type="EMBL" id="CU234118">
    <property type="protein sequence ID" value="CAL77804.1"/>
    <property type="molecule type" value="Genomic_DNA"/>
</dbReference>
<dbReference type="RefSeq" id="WP_011926937.1">
    <property type="nucleotide sequence ID" value="NC_009445.1"/>
</dbReference>
<dbReference type="SMR" id="A4YV78"/>
<dbReference type="STRING" id="114615.BRADO4052"/>
<dbReference type="KEGG" id="bra:BRADO4052"/>
<dbReference type="eggNOG" id="COG0018">
    <property type="taxonomic scope" value="Bacteria"/>
</dbReference>
<dbReference type="HOGENOM" id="CLU_006406_0_1_5"/>
<dbReference type="OrthoDB" id="9803211at2"/>
<dbReference type="Proteomes" id="UP000001994">
    <property type="component" value="Chromosome"/>
</dbReference>
<dbReference type="GO" id="GO:0005737">
    <property type="term" value="C:cytoplasm"/>
    <property type="evidence" value="ECO:0007669"/>
    <property type="project" value="UniProtKB-SubCell"/>
</dbReference>
<dbReference type="GO" id="GO:0004814">
    <property type="term" value="F:arginine-tRNA ligase activity"/>
    <property type="evidence" value="ECO:0007669"/>
    <property type="project" value="UniProtKB-UniRule"/>
</dbReference>
<dbReference type="GO" id="GO:0005524">
    <property type="term" value="F:ATP binding"/>
    <property type="evidence" value="ECO:0007669"/>
    <property type="project" value="UniProtKB-UniRule"/>
</dbReference>
<dbReference type="GO" id="GO:0006420">
    <property type="term" value="P:arginyl-tRNA aminoacylation"/>
    <property type="evidence" value="ECO:0007669"/>
    <property type="project" value="UniProtKB-UniRule"/>
</dbReference>
<dbReference type="CDD" id="cd00671">
    <property type="entry name" value="ArgRS_core"/>
    <property type="match status" value="1"/>
</dbReference>
<dbReference type="FunFam" id="1.10.730.10:FF:000008">
    <property type="entry name" value="Arginine--tRNA ligase"/>
    <property type="match status" value="1"/>
</dbReference>
<dbReference type="FunFam" id="3.40.50.620:FF:000062">
    <property type="entry name" value="Arginine--tRNA ligase"/>
    <property type="match status" value="1"/>
</dbReference>
<dbReference type="Gene3D" id="3.30.1360.70">
    <property type="entry name" value="Arginyl tRNA synthetase N-terminal domain"/>
    <property type="match status" value="1"/>
</dbReference>
<dbReference type="Gene3D" id="3.40.50.620">
    <property type="entry name" value="HUPs"/>
    <property type="match status" value="1"/>
</dbReference>
<dbReference type="Gene3D" id="1.10.730.10">
    <property type="entry name" value="Isoleucyl-tRNA Synthetase, Domain 1"/>
    <property type="match status" value="1"/>
</dbReference>
<dbReference type="HAMAP" id="MF_00123">
    <property type="entry name" value="Arg_tRNA_synth"/>
    <property type="match status" value="1"/>
</dbReference>
<dbReference type="InterPro" id="IPR001412">
    <property type="entry name" value="aa-tRNA-synth_I_CS"/>
</dbReference>
<dbReference type="InterPro" id="IPR001278">
    <property type="entry name" value="Arg-tRNA-ligase"/>
</dbReference>
<dbReference type="InterPro" id="IPR005148">
    <property type="entry name" value="Arg-tRNA-synth_N"/>
</dbReference>
<dbReference type="InterPro" id="IPR036695">
    <property type="entry name" value="Arg-tRNA-synth_N_sf"/>
</dbReference>
<dbReference type="InterPro" id="IPR035684">
    <property type="entry name" value="ArgRS_core"/>
</dbReference>
<dbReference type="InterPro" id="IPR008909">
    <property type="entry name" value="DALR_anticod-bd"/>
</dbReference>
<dbReference type="InterPro" id="IPR014729">
    <property type="entry name" value="Rossmann-like_a/b/a_fold"/>
</dbReference>
<dbReference type="InterPro" id="IPR009080">
    <property type="entry name" value="tRNAsynth_Ia_anticodon-bd"/>
</dbReference>
<dbReference type="NCBIfam" id="TIGR00456">
    <property type="entry name" value="argS"/>
    <property type="match status" value="1"/>
</dbReference>
<dbReference type="PANTHER" id="PTHR11956:SF5">
    <property type="entry name" value="ARGININE--TRNA LIGASE, CYTOPLASMIC"/>
    <property type="match status" value="1"/>
</dbReference>
<dbReference type="PANTHER" id="PTHR11956">
    <property type="entry name" value="ARGINYL-TRNA SYNTHETASE"/>
    <property type="match status" value="1"/>
</dbReference>
<dbReference type="Pfam" id="PF03485">
    <property type="entry name" value="Arg_tRNA_synt_N"/>
    <property type="match status" value="1"/>
</dbReference>
<dbReference type="Pfam" id="PF05746">
    <property type="entry name" value="DALR_1"/>
    <property type="match status" value="1"/>
</dbReference>
<dbReference type="Pfam" id="PF00750">
    <property type="entry name" value="tRNA-synt_1d"/>
    <property type="match status" value="2"/>
</dbReference>
<dbReference type="PRINTS" id="PR01038">
    <property type="entry name" value="TRNASYNTHARG"/>
</dbReference>
<dbReference type="SMART" id="SM01016">
    <property type="entry name" value="Arg_tRNA_synt_N"/>
    <property type="match status" value="1"/>
</dbReference>
<dbReference type="SMART" id="SM00836">
    <property type="entry name" value="DALR_1"/>
    <property type="match status" value="1"/>
</dbReference>
<dbReference type="SUPFAM" id="SSF47323">
    <property type="entry name" value="Anticodon-binding domain of a subclass of class I aminoacyl-tRNA synthetases"/>
    <property type="match status" value="1"/>
</dbReference>
<dbReference type="SUPFAM" id="SSF55190">
    <property type="entry name" value="Arginyl-tRNA synthetase (ArgRS), N-terminal 'additional' domain"/>
    <property type="match status" value="1"/>
</dbReference>
<dbReference type="SUPFAM" id="SSF52374">
    <property type="entry name" value="Nucleotidylyl transferase"/>
    <property type="match status" value="1"/>
</dbReference>
<dbReference type="PROSITE" id="PS00178">
    <property type="entry name" value="AA_TRNA_LIGASE_I"/>
    <property type="match status" value="1"/>
</dbReference>
<evidence type="ECO:0000255" key="1">
    <source>
        <dbReference type="HAMAP-Rule" id="MF_00123"/>
    </source>
</evidence>
<sequence length="598" mass="66094">MVEQASTPYLFADMLARVHAICAALAKSGGWPEGIDFSRVVVEPPRDPSHGDMATNAAMVLAKEAKAKPRDLAEQIAERLRADELVAKVDVAGPGFINLTLQPSVWSKALATILREGAAYGRVAPVPGAPKVNVEYVSANPTGPMHVGHCRGAVFGDALSSLLQFAGRDVTREYYINDAGAQVDVLARSAYLRYREALGEDIGAIPEGLYPGDYLKPVGQALKTEHGDKLKAMPDAQWLPIVRDKAIAMMMDEIKDDLAALNIRHDVFFSERSLITGGNNKVAETIDFLRERGDVYEGRLPPPKGAPVEDWEDREQLLFRATAFGDDVDRPLIKSDGSYTYFASDIANHRHKFERGFADLIDVFGADHGGYIKRMQAAVKAVTAAQATLDVKVVQLVKLLRNGEPVKMSKRSGDFVTLREVVDEVGRDAVRFMMLYRKNDAVLDFDLAKVIEQSKDNPVFYVQYGHARGHSIFRNARESLPELPEEEGARIAFLREAKLERLADSAEHDLLKRLALYPRTVESAAMAHEPHRIAFYLYELASEFHALWTRGRDLPYLRFIIDDDAELTKARLAMVQGVVSVLASGLAILGVNAPDAMR</sequence>
<feature type="chain" id="PRO_1000017994" description="Arginine--tRNA ligase">
    <location>
        <begin position="1"/>
        <end position="598"/>
    </location>
</feature>
<feature type="short sequence motif" description="'HIGH' region">
    <location>
        <begin position="139"/>
        <end position="149"/>
    </location>
</feature>
<protein>
    <recommendedName>
        <fullName evidence="1">Arginine--tRNA ligase</fullName>
        <ecNumber evidence="1">6.1.1.19</ecNumber>
    </recommendedName>
    <alternativeName>
        <fullName evidence="1">Arginyl-tRNA synthetase</fullName>
        <shortName evidence="1">ArgRS</shortName>
    </alternativeName>
</protein>
<reference key="1">
    <citation type="journal article" date="2007" name="Science">
        <title>Legumes symbioses: absence of nod genes in photosynthetic bradyrhizobia.</title>
        <authorList>
            <person name="Giraud E."/>
            <person name="Moulin L."/>
            <person name="Vallenet D."/>
            <person name="Barbe V."/>
            <person name="Cytryn E."/>
            <person name="Avarre J.-C."/>
            <person name="Jaubert M."/>
            <person name="Simon D."/>
            <person name="Cartieaux F."/>
            <person name="Prin Y."/>
            <person name="Bena G."/>
            <person name="Hannibal L."/>
            <person name="Fardoux J."/>
            <person name="Kojadinovic M."/>
            <person name="Vuillet L."/>
            <person name="Lajus A."/>
            <person name="Cruveiller S."/>
            <person name="Rouy Z."/>
            <person name="Mangenot S."/>
            <person name="Segurens B."/>
            <person name="Dossat C."/>
            <person name="Franck W.L."/>
            <person name="Chang W.-S."/>
            <person name="Saunders E."/>
            <person name="Bruce D."/>
            <person name="Richardson P."/>
            <person name="Normand P."/>
            <person name="Dreyfus B."/>
            <person name="Pignol D."/>
            <person name="Stacey G."/>
            <person name="Emerich D."/>
            <person name="Vermeglio A."/>
            <person name="Medigue C."/>
            <person name="Sadowsky M."/>
        </authorList>
    </citation>
    <scope>NUCLEOTIDE SEQUENCE [LARGE SCALE GENOMIC DNA]</scope>
    <source>
        <strain>ORS 278</strain>
    </source>
</reference>
<organism>
    <name type="scientific">Bradyrhizobium sp. (strain ORS 278)</name>
    <dbReference type="NCBI Taxonomy" id="114615"/>
    <lineage>
        <taxon>Bacteria</taxon>
        <taxon>Pseudomonadati</taxon>
        <taxon>Pseudomonadota</taxon>
        <taxon>Alphaproteobacteria</taxon>
        <taxon>Hyphomicrobiales</taxon>
        <taxon>Nitrobacteraceae</taxon>
        <taxon>Bradyrhizobium</taxon>
    </lineage>
</organism>
<keyword id="KW-0030">Aminoacyl-tRNA synthetase</keyword>
<keyword id="KW-0067">ATP-binding</keyword>
<keyword id="KW-0963">Cytoplasm</keyword>
<keyword id="KW-0436">Ligase</keyword>
<keyword id="KW-0547">Nucleotide-binding</keyword>
<keyword id="KW-0648">Protein biosynthesis</keyword>
<keyword id="KW-1185">Reference proteome</keyword>
<comment type="catalytic activity">
    <reaction evidence="1">
        <text>tRNA(Arg) + L-arginine + ATP = L-arginyl-tRNA(Arg) + AMP + diphosphate</text>
        <dbReference type="Rhea" id="RHEA:20301"/>
        <dbReference type="Rhea" id="RHEA-COMP:9658"/>
        <dbReference type="Rhea" id="RHEA-COMP:9673"/>
        <dbReference type="ChEBI" id="CHEBI:30616"/>
        <dbReference type="ChEBI" id="CHEBI:32682"/>
        <dbReference type="ChEBI" id="CHEBI:33019"/>
        <dbReference type="ChEBI" id="CHEBI:78442"/>
        <dbReference type="ChEBI" id="CHEBI:78513"/>
        <dbReference type="ChEBI" id="CHEBI:456215"/>
        <dbReference type="EC" id="6.1.1.19"/>
    </reaction>
</comment>
<comment type="subunit">
    <text evidence="1">Monomer.</text>
</comment>
<comment type="subcellular location">
    <subcellularLocation>
        <location evidence="1">Cytoplasm</location>
    </subcellularLocation>
</comment>
<comment type="similarity">
    <text evidence="1">Belongs to the class-I aminoacyl-tRNA synthetase family.</text>
</comment>
<accession>A4YV78</accession>